<accession>O08915</accession>
<accession>Q3UJM2</accession>
<feature type="chain" id="PRO_0000075340" description="AH receptor-interacting protein">
    <location>
        <begin position="1"/>
        <end position="330"/>
    </location>
</feature>
<feature type="domain" description="PPIase FKBP-type">
    <location>
        <begin position="31"/>
        <end position="121"/>
    </location>
</feature>
<feature type="repeat" description="TPR 1" evidence="2">
    <location>
        <begin position="179"/>
        <end position="212"/>
    </location>
</feature>
<feature type="repeat" description="TPR 2" evidence="1">
    <location>
        <begin position="231"/>
        <end position="264"/>
    </location>
</feature>
<feature type="repeat" description="TPR 3" evidence="2 3">
    <location>
        <begin position="265"/>
        <end position="298"/>
    </location>
</feature>
<feature type="modified residue" description="Phosphoserine" evidence="1">
    <location>
        <position position="43"/>
    </location>
</feature>
<feature type="helix" evidence="4">
    <location>
        <begin position="3"/>
        <end position="9"/>
    </location>
</feature>
<feature type="turn" evidence="4">
    <location>
        <begin position="10"/>
        <end position="12"/>
    </location>
</feature>
<feature type="strand" evidence="4">
    <location>
        <begin position="33"/>
        <end position="36"/>
    </location>
</feature>
<feature type="strand" evidence="4">
    <location>
        <begin position="39"/>
        <end position="41"/>
    </location>
</feature>
<feature type="turn" evidence="4">
    <location>
        <begin position="43"/>
        <end position="47"/>
    </location>
</feature>
<feature type="helix" evidence="4">
    <location>
        <begin position="53"/>
        <end position="55"/>
    </location>
</feature>
<feature type="helix" evidence="4">
    <location>
        <begin position="71"/>
        <end position="79"/>
    </location>
</feature>
<feature type="helix" evidence="4">
    <location>
        <begin position="98"/>
        <end position="107"/>
    </location>
</feature>
<feature type="helix" evidence="4">
    <location>
        <begin position="136"/>
        <end position="143"/>
    </location>
</feature>
<feature type="strand" evidence="4">
    <location>
        <begin position="154"/>
        <end position="157"/>
    </location>
</feature>
<feature type="strand" evidence="4">
    <location>
        <begin position="162"/>
        <end position="164"/>
    </location>
</feature>
<feature type="helix" evidence="4">
    <location>
        <begin position="173"/>
        <end position="192"/>
    </location>
</feature>
<feature type="helix" evidence="4">
    <location>
        <begin position="196"/>
        <end position="213"/>
    </location>
</feature>
<feature type="helix" evidence="4">
    <location>
        <begin position="221"/>
        <end position="244"/>
    </location>
</feature>
<feature type="helix" evidence="4">
    <location>
        <begin position="247"/>
        <end position="257"/>
    </location>
</feature>
<feature type="turn" evidence="4">
    <location>
        <begin position="258"/>
        <end position="260"/>
    </location>
</feature>
<feature type="helix" evidence="4">
    <location>
        <begin position="266"/>
        <end position="277"/>
    </location>
</feature>
<feature type="helix" evidence="4">
    <location>
        <begin position="281"/>
        <end position="294"/>
    </location>
</feature>
<feature type="helix" evidence="4">
    <location>
        <begin position="299"/>
        <end position="319"/>
    </location>
</feature>
<feature type="helix" evidence="4">
    <location>
        <begin position="321"/>
        <end position="328"/>
    </location>
</feature>
<sequence length="330" mass="37605">MADLIARLREDGIQKRVIQEGRGELPDFQDGTKATFHFRTLHSDNEGSVIDDSRTRGKPMELIVGKKFKLPVWETIVCTMREGEIAQFLCDIKHVVLYPLVAKSLRNIAEGKDPLEGQRHCCGIAQMHEHSSLGHADLDALQQNPQPLIFHIEMLKVESPGTYQQDPWAMTDEEKAKAVPVIHQEGNRLYREGQVKEAAAKYYDAIACLKNLQMKEQPGSPDWIQLDLQITPLLLNYCQCKLVAQEYYEVLDHCSSILNKYDDNVKAYFKRGKAHAAVWNAQEAQADFAKVLELDPALAPVVSRELRALETRIRQKDEEDKARFRGIFSH</sequence>
<reference key="1">
    <citation type="journal article" date="1997" name="J. Biol. Chem.">
        <title>A novel cytoplasmic protein that interacts with the Ah receptor, contains tetratricopeptide repeat motifs, and augments the transcriptional response to 2,3,7,8-tetrachlorodibenzo-p-dioxin.</title>
        <authorList>
            <person name="Ma Q."/>
            <person name="Whitlock J.P. Jr."/>
        </authorList>
    </citation>
    <scope>NUCLEOTIDE SEQUENCE [MRNA]</scope>
</reference>
<reference key="2">
    <citation type="journal article" date="2005" name="Science">
        <title>The transcriptional landscape of the mammalian genome.</title>
        <authorList>
            <person name="Carninci P."/>
            <person name="Kasukawa T."/>
            <person name="Katayama S."/>
            <person name="Gough J."/>
            <person name="Frith M.C."/>
            <person name="Maeda N."/>
            <person name="Oyama R."/>
            <person name="Ravasi T."/>
            <person name="Lenhard B."/>
            <person name="Wells C."/>
            <person name="Kodzius R."/>
            <person name="Shimokawa K."/>
            <person name="Bajic V.B."/>
            <person name="Brenner S.E."/>
            <person name="Batalov S."/>
            <person name="Forrest A.R."/>
            <person name="Zavolan M."/>
            <person name="Davis M.J."/>
            <person name="Wilming L.G."/>
            <person name="Aidinis V."/>
            <person name="Allen J.E."/>
            <person name="Ambesi-Impiombato A."/>
            <person name="Apweiler R."/>
            <person name="Aturaliya R.N."/>
            <person name="Bailey T.L."/>
            <person name="Bansal M."/>
            <person name="Baxter L."/>
            <person name="Beisel K.W."/>
            <person name="Bersano T."/>
            <person name="Bono H."/>
            <person name="Chalk A.M."/>
            <person name="Chiu K.P."/>
            <person name="Choudhary V."/>
            <person name="Christoffels A."/>
            <person name="Clutterbuck D.R."/>
            <person name="Crowe M.L."/>
            <person name="Dalla E."/>
            <person name="Dalrymple B.P."/>
            <person name="de Bono B."/>
            <person name="Della Gatta G."/>
            <person name="di Bernardo D."/>
            <person name="Down T."/>
            <person name="Engstrom P."/>
            <person name="Fagiolini M."/>
            <person name="Faulkner G."/>
            <person name="Fletcher C.F."/>
            <person name="Fukushima T."/>
            <person name="Furuno M."/>
            <person name="Futaki S."/>
            <person name="Gariboldi M."/>
            <person name="Georgii-Hemming P."/>
            <person name="Gingeras T.R."/>
            <person name="Gojobori T."/>
            <person name="Green R.E."/>
            <person name="Gustincich S."/>
            <person name="Harbers M."/>
            <person name="Hayashi Y."/>
            <person name="Hensch T.K."/>
            <person name="Hirokawa N."/>
            <person name="Hill D."/>
            <person name="Huminiecki L."/>
            <person name="Iacono M."/>
            <person name="Ikeo K."/>
            <person name="Iwama A."/>
            <person name="Ishikawa T."/>
            <person name="Jakt M."/>
            <person name="Kanapin A."/>
            <person name="Katoh M."/>
            <person name="Kawasawa Y."/>
            <person name="Kelso J."/>
            <person name="Kitamura H."/>
            <person name="Kitano H."/>
            <person name="Kollias G."/>
            <person name="Krishnan S.P."/>
            <person name="Kruger A."/>
            <person name="Kummerfeld S.K."/>
            <person name="Kurochkin I.V."/>
            <person name="Lareau L.F."/>
            <person name="Lazarevic D."/>
            <person name="Lipovich L."/>
            <person name="Liu J."/>
            <person name="Liuni S."/>
            <person name="McWilliam S."/>
            <person name="Madan Babu M."/>
            <person name="Madera M."/>
            <person name="Marchionni L."/>
            <person name="Matsuda H."/>
            <person name="Matsuzawa S."/>
            <person name="Miki H."/>
            <person name="Mignone F."/>
            <person name="Miyake S."/>
            <person name="Morris K."/>
            <person name="Mottagui-Tabar S."/>
            <person name="Mulder N."/>
            <person name="Nakano N."/>
            <person name="Nakauchi H."/>
            <person name="Ng P."/>
            <person name="Nilsson R."/>
            <person name="Nishiguchi S."/>
            <person name="Nishikawa S."/>
            <person name="Nori F."/>
            <person name="Ohara O."/>
            <person name="Okazaki Y."/>
            <person name="Orlando V."/>
            <person name="Pang K.C."/>
            <person name="Pavan W.J."/>
            <person name="Pavesi G."/>
            <person name="Pesole G."/>
            <person name="Petrovsky N."/>
            <person name="Piazza S."/>
            <person name="Reed J."/>
            <person name="Reid J.F."/>
            <person name="Ring B.Z."/>
            <person name="Ringwald M."/>
            <person name="Rost B."/>
            <person name="Ruan Y."/>
            <person name="Salzberg S.L."/>
            <person name="Sandelin A."/>
            <person name="Schneider C."/>
            <person name="Schoenbach C."/>
            <person name="Sekiguchi K."/>
            <person name="Semple C.A."/>
            <person name="Seno S."/>
            <person name="Sessa L."/>
            <person name="Sheng Y."/>
            <person name="Shibata Y."/>
            <person name="Shimada H."/>
            <person name="Shimada K."/>
            <person name="Silva D."/>
            <person name="Sinclair B."/>
            <person name="Sperling S."/>
            <person name="Stupka E."/>
            <person name="Sugiura K."/>
            <person name="Sultana R."/>
            <person name="Takenaka Y."/>
            <person name="Taki K."/>
            <person name="Tammoja K."/>
            <person name="Tan S.L."/>
            <person name="Tang S."/>
            <person name="Taylor M.S."/>
            <person name="Tegner J."/>
            <person name="Teichmann S.A."/>
            <person name="Ueda H.R."/>
            <person name="van Nimwegen E."/>
            <person name="Verardo R."/>
            <person name="Wei C.L."/>
            <person name="Yagi K."/>
            <person name="Yamanishi H."/>
            <person name="Zabarovsky E."/>
            <person name="Zhu S."/>
            <person name="Zimmer A."/>
            <person name="Hide W."/>
            <person name="Bult C."/>
            <person name="Grimmond S.M."/>
            <person name="Teasdale R.D."/>
            <person name="Liu E.T."/>
            <person name="Brusic V."/>
            <person name="Quackenbush J."/>
            <person name="Wahlestedt C."/>
            <person name="Mattick J.S."/>
            <person name="Hume D.A."/>
            <person name="Kai C."/>
            <person name="Sasaki D."/>
            <person name="Tomaru Y."/>
            <person name="Fukuda S."/>
            <person name="Kanamori-Katayama M."/>
            <person name="Suzuki M."/>
            <person name="Aoki J."/>
            <person name="Arakawa T."/>
            <person name="Iida J."/>
            <person name="Imamura K."/>
            <person name="Itoh M."/>
            <person name="Kato T."/>
            <person name="Kawaji H."/>
            <person name="Kawagashira N."/>
            <person name="Kawashima T."/>
            <person name="Kojima M."/>
            <person name="Kondo S."/>
            <person name="Konno H."/>
            <person name="Nakano K."/>
            <person name="Ninomiya N."/>
            <person name="Nishio T."/>
            <person name="Okada M."/>
            <person name="Plessy C."/>
            <person name="Shibata K."/>
            <person name="Shiraki T."/>
            <person name="Suzuki S."/>
            <person name="Tagami M."/>
            <person name="Waki K."/>
            <person name="Watahiki A."/>
            <person name="Okamura-Oho Y."/>
            <person name="Suzuki H."/>
            <person name="Kawai J."/>
            <person name="Hayashizaki Y."/>
        </authorList>
    </citation>
    <scope>NUCLEOTIDE SEQUENCE [LARGE SCALE MRNA]</scope>
    <source>
        <strain>DBA/2J</strain>
    </source>
</reference>
<reference key="3">
    <citation type="journal article" date="2004" name="Genome Res.">
        <title>The status, quality, and expansion of the NIH full-length cDNA project: the Mammalian Gene Collection (MGC).</title>
        <authorList>
            <consortium name="The MGC Project Team"/>
        </authorList>
    </citation>
    <scope>NUCLEOTIDE SEQUENCE [LARGE SCALE MRNA]</scope>
    <source>
        <strain>C57BL/6J</strain>
        <tissue>Brain</tissue>
    </source>
</reference>
<reference key="4">
    <citation type="submission" date="2007-03" db="UniProtKB">
        <authorList>
            <person name="Lubec G."/>
            <person name="Klug S."/>
        </authorList>
    </citation>
    <scope>PROTEIN SEQUENCE OF 291-304</scope>
    <scope>IDENTIFICATION BY MASS SPECTROMETRY</scope>
    <source>
        <tissue>Hippocampus</tissue>
    </source>
</reference>
<reference key="5">
    <citation type="journal article" date="2010" name="Cell">
        <title>A tissue-specific atlas of mouse protein phosphorylation and expression.</title>
        <authorList>
            <person name="Huttlin E.L."/>
            <person name="Jedrychowski M.P."/>
            <person name="Elias J.E."/>
            <person name="Goswami T."/>
            <person name="Rad R."/>
            <person name="Beausoleil S.A."/>
            <person name="Villen J."/>
            <person name="Haas W."/>
            <person name="Sowa M.E."/>
            <person name="Gygi S.P."/>
        </authorList>
    </citation>
    <scope>IDENTIFICATION BY MASS SPECTROMETRY [LARGE SCALE ANALYSIS]</scope>
    <source>
        <tissue>Brain</tissue>
        <tissue>Heart</tissue>
        <tissue>Kidney</tissue>
        <tissue>Liver</tissue>
        <tissue>Lung</tissue>
        <tissue>Pancreas</tissue>
        <tissue>Spleen</tissue>
        <tissue>Testis</tissue>
    </source>
</reference>
<protein>
    <recommendedName>
        <fullName>AH receptor-interacting protein</fullName>
        <shortName>AIP</shortName>
    </recommendedName>
    <alternativeName>
        <fullName>Aryl-hydrocarbon receptor-interacting protein</fullName>
    </alternativeName>
</protein>
<gene>
    <name type="primary">Aip</name>
</gene>
<organism>
    <name type="scientific">Mus musculus</name>
    <name type="common">Mouse</name>
    <dbReference type="NCBI Taxonomy" id="10090"/>
    <lineage>
        <taxon>Eukaryota</taxon>
        <taxon>Metazoa</taxon>
        <taxon>Chordata</taxon>
        <taxon>Craniata</taxon>
        <taxon>Vertebrata</taxon>
        <taxon>Euteleostomi</taxon>
        <taxon>Mammalia</taxon>
        <taxon>Eutheria</taxon>
        <taxon>Euarchontoglires</taxon>
        <taxon>Glires</taxon>
        <taxon>Rodentia</taxon>
        <taxon>Myomorpha</taxon>
        <taxon>Muroidea</taxon>
        <taxon>Muridae</taxon>
        <taxon>Murinae</taxon>
        <taxon>Mus</taxon>
        <taxon>Mus</taxon>
    </lineage>
</organism>
<keyword id="KW-0002">3D-structure</keyword>
<keyword id="KW-0963">Cytoplasm</keyword>
<keyword id="KW-0903">Direct protein sequencing</keyword>
<keyword id="KW-0597">Phosphoprotein</keyword>
<keyword id="KW-1185">Reference proteome</keyword>
<keyword id="KW-0677">Repeat</keyword>
<keyword id="KW-0802">TPR repeat</keyword>
<evidence type="ECO:0000250" key="1">
    <source>
        <dbReference type="UniProtKB" id="O00170"/>
    </source>
</evidence>
<evidence type="ECO:0000255" key="2"/>
<evidence type="ECO:0000255" key="3">
    <source>
        <dbReference type="PROSITE-ProRule" id="PRU00339"/>
    </source>
</evidence>
<evidence type="ECO:0007829" key="4">
    <source>
        <dbReference type="PDB" id="8H77"/>
    </source>
</evidence>
<dbReference type="EMBL" id="U85489">
    <property type="protein sequence ID" value="AAB59009.1"/>
    <property type="molecule type" value="mRNA"/>
</dbReference>
<dbReference type="EMBL" id="AK146390">
    <property type="protein sequence ID" value="BAE27133.1"/>
    <property type="molecule type" value="mRNA"/>
</dbReference>
<dbReference type="EMBL" id="BC075614">
    <property type="protein sequence ID" value="AAH75614.1"/>
    <property type="molecule type" value="mRNA"/>
</dbReference>
<dbReference type="CCDS" id="CCDS29415.1"/>
<dbReference type="RefSeq" id="NP_001263213.1">
    <property type="nucleotide sequence ID" value="NM_001276284.2"/>
</dbReference>
<dbReference type="RefSeq" id="NP_001396682.1">
    <property type="nucleotide sequence ID" value="NM_001409753.1"/>
</dbReference>
<dbReference type="RefSeq" id="NP_001396683.1">
    <property type="nucleotide sequence ID" value="NM_001409754.1"/>
</dbReference>
<dbReference type="RefSeq" id="NP_057875.1">
    <property type="nucleotide sequence ID" value="NM_016666.4"/>
</dbReference>
<dbReference type="RefSeq" id="XP_006531704.2">
    <property type="nucleotide sequence ID" value="XM_006531641.3"/>
</dbReference>
<dbReference type="RefSeq" id="XP_006531705.1">
    <property type="nucleotide sequence ID" value="XM_006531642.3"/>
</dbReference>
<dbReference type="RefSeq" id="XP_036017297.1">
    <property type="nucleotide sequence ID" value="XM_036161404.1"/>
</dbReference>
<dbReference type="PDB" id="8H77">
    <property type="method" value="EM"/>
    <property type="resolution" value="3.20 A"/>
    <property type="chains" value="F=2-330"/>
</dbReference>
<dbReference type="PDBsum" id="8H77"/>
<dbReference type="EMDB" id="EMD-34519"/>
<dbReference type="SMR" id="O08915"/>
<dbReference type="BioGRID" id="198043">
    <property type="interactions" value="25"/>
</dbReference>
<dbReference type="CORUM" id="O08915"/>
<dbReference type="FunCoup" id="O08915">
    <property type="interactions" value="847"/>
</dbReference>
<dbReference type="IntAct" id="O08915">
    <property type="interactions" value="6"/>
</dbReference>
<dbReference type="MINT" id="O08915"/>
<dbReference type="STRING" id="10090.ENSMUSP00000113807"/>
<dbReference type="GlyGen" id="O08915">
    <property type="glycosylation" value="2 sites, 1 O-linked glycan (2 sites)"/>
</dbReference>
<dbReference type="iPTMnet" id="O08915"/>
<dbReference type="PhosphoSitePlus" id="O08915"/>
<dbReference type="SwissPalm" id="O08915"/>
<dbReference type="REPRODUCTION-2DPAGE" id="O08915"/>
<dbReference type="PaxDb" id="10090-ENSMUSP00000113807"/>
<dbReference type="PeptideAtlas" id="O08915"/>
<dbReference type="ProteomicsDB" id="296144"/>
<dbReference type="Pumba" id="O08915"/>
<dbReference type="Antibodypedia" id="1367">
    <property type="antibodies" value="418 antibodies from 35 providers"/>
</dbReference>
<dbReference type="DNASU" id="11632"/>
<dbReference type="Ensembl" id="ENSMUST00000025767.14">
    <property type="protein sequence ID" value="ENSMUSP00000025767.8"/>
    <property type="gene ID" value="ENSMUSG00000024847.16"/>
</dbReference>
<dbReference type="Ensembl" id="ENSMUST00000117831.8">
    <property type="protein sequence ID" value="ENSMUSP00000113807.2"/>
    <property type="gene ID" value="ENSMUSG00000024847.16"/>
</dbReference>
<dbReference type="GeneID" id="11632"/>
<dbReference type="KEGG" id="mmu:11632"/>
<dbReference type="UCSC" id="uc008fyp.2">
    <property type="organism name" value="mouse"/>
</dbReference>
<dbReference type="AGR" id="MGI:109622"/>
<dbReference type="CTD" id="9049"/>
<dbReference type="MGI" id="MGI:109622">
    <property type="gene designation" value="Aip"/>
</dbReference>
<dbReference type="VEuPathDB" id="HostDB:ENSMUSG00000024847"/>
<dbReference type="eggNOG" id="KOG0545">
    <property type="taxonomic scope" value="Eukaryota"/>
</dbReference>
<dbReference type="GeneTree" id="ENSGT00390000001289"/>
<dbReference type="HOGENOM" id="CLU_052244_0_1_1"/>
<dbReference type="InParanoid" id="O08915"/>
<dbReference type="OMA" id="SHCCGMM"/>
<dbReference type="OrthoDB" id="5829758at2759"/>
<dbReference type="PhylomeDB" id="O08915"/>
<dbReference type="TreeFam" id="TF314507"/>
<dbReference type="Reactome" id="R-MMU-8937144">
    <property type="pathway name" value="Aryl hydrocarbon receptor signalling"/>
</dbReference>
<dbReference type="BioGRID-ORCS" id="11632">
    <property type="hits" value="13 hits in 82 CRISPR screens"/>
</dbReference>
<dbReference type="ChiTaRS" id="Aip">
    <property type="organism name" value="mouse"/>
</dbReference>
<dbReference type="PRO" id="PR:O08915"/>
<dbReference type="Proteomes" id="UP000000589">
    <property type="component" value="Chromosome 19"/>
</dbReference>
<dbReference type="RNAct" id="O08915">
    <property type="molecule type" value="protein"/>
</dbReference>
<dbReference type="Bgee" id="ENSMUSG00000024847">
    <property type="expression patterns" value="Expressed in retinal neural layer and 80 other cell types or tissues"/>
</dbReference>
<dbReference type="ExpressionAtlas" id="O08915">
    <property type="expression patterns" value="baseline and differential"/>
</dbReference>
<dbReference type="GO" id="GO:0034751">
    <property type="term" value="C:aryl hydrocarbon receptor complex"/>
    <property type="evidence" value="ECO:0000314"/>
    <property type="project" value="MGI"/>
</dbReference>
<dbReference type="GO" id="GO:0005829">
    <property type="term" value="C:cytosol"/>
    <property type="evidence" value="ECO:0000314"/>
    <property type="project" value="MGI"/>
</dbReference>
<dbReference type="GO" id="GO:0016020">
    <property type="term" value="C:membrane"/>
    <property type="evidence" value="ECO:0000314"/>
    <property type="project" value="MGI"/>
</dbReference>
<dbReference type="GO" id="GO:0005886">
    <property type="term" value="C:plasma membrane"/>
    <property type="evidence" value="ECO:0007669"/>
    <property type="project" value="Ensembl"/>
</dbReference>
<dbReference type="GO" id="GO:0017162">
    <property type="term" value="F:aryl hydrocarbon receptor binding"/>
    <property type="evidence" value="ECO:0000353"/>
    <property type="project" value="MGI"/>
</dbReference>
<dbReference type="GO" id="GO:0036004">
    <property type="term" value="F:GAF domain binding"/>
    <property type="evidence" value="ECO:0007669"/>
    <property type="project" value="Ensembl"/>
</dbReference>
<dbReference type="GO" id="GO:0003755">
    <property type="term" value="F:peptidyl-prolyl cis-trans isomerase activity"/>
    <property type="evidence" value="ECO:0007669"/>
    <property type="project" value="Ensembl"/>
</dbReference>
<dbReference type="GO" id="GO:0003712">
    <property type="term" value="F:transcription coregulator activity"/>
    <property type="evidence" value="ECO:0000353"/>
    <property type="project" value="MGI"/>
</dbReference>
<dbReference type="GO" id="GO:0051082">
    <property type="term" value="F:unfolded protein binding"/>
    <property type="evidence" value="ECO:0000250"/>
    <property type="project" value="HGNC-UCL"/>
</dbReference>
<dbReference type="GO" id="GO:0051604">
    <property type="term" value="P:protein maturation"/>
    <property type="evidence" value="ECO:0000250"/>
    <property type="project" value="HGNC-UCL"/>
</dbReference>
<dbReference type="GO" id="GO:0006626">
    <property type="term" value="P:protein targeting to mitochondrion"/>
    <property type="evidence" value="ECO:0000250"/>
    <property type="project" value="HGNC-UCL"/>
</dbReference>
<dbReference type="GO" id="GO:0006805">
    <property type="term" value="P:xenobiotic metabolic process"/>
    <property type="evidence" value="ECO:0000353"/>
    <property type="project" value="MGI"/>
</dbReference>
<dbReference type="FunFam" id="1.25.40.10:FF:000052">
    <property type="entry name" value="Aryl-hydrocarbon-interacting protein-like 1"/>
    <property type="match status" value="1"/>
</dbReference>
<dbReference type="FunFam" id="3.10.50.40:FF:000018">
    <property type="entry name" value="Aryl-hydrocarbon-interacting protein-like 1"/>
    <property type="match status" value="1"/>
</dbReference>
<dbReference type="Gene3D" id="3.10.50.40">
    <property type="match status" value="1"/>
</dbReference>
<dbReference type="Gene3D" id="1.25.40.10">
    <property type="entry name" value="Tetratricopeptide repeat domain"/>
    <property type="match status" value="1"/>
</dbReference>
<dbReference type="InterPro" id="IPR039663">
    <property type="entry name" value="AIP/AIPL1/TTC9"/>
</dbReference>
<dbReference type="InterPro" id="IPR056277">
    <property type="entry name" value="PPIase_AIP"/>
</dbReference>
<dbReference type="InterPro" id="IPR046357">
    <property type="entry name" value="PPIase_dom_sf"/>
</dbReference>
<dbReference type="InterPro" id="IPR011990">
    <property type="entry name" value="TPR-like_helical_dom_sf"/>
</dbReference>
<dbReference type="InterPro" id="IPR019734">
    <property type="entry name" value="TPR_rpt"/>
</dbReference>
<dbReference type="PANTHER" id="PTHR11242:SF3">
    <property type="entry name" value="AH RECEPTOR-INTERACTING PROTEIN"/>
    <property type="match status" value="1"/>
</dbReference>
<dbReference type="PANTHER" id="PTHR11242">
    <property type="entry name" value="ARYL HYDROCARBON RECEPTOR INTERACTING PROTEIN RELATED"/>
    <property type="match status" value="1"/>
</dbReference>
<dbReference type="Pfam" id="PF23322">
    <property type="entry name" value="PPIase_AIP"/>
    <property type="match status" value="1"/>
</dbReference>
<dbReference type="SUPFAM" id="SSF54534">
    <property type="entry name" value="FKBP-like"/>
    <property type="match status" value="1"/>
</dbReference>
<dbReference type="SUPFAM" id="SSF48452">
    <property type="entry name" value="TPR-like"/>
    <property type="match status" value="1"/>
</dbReference>
<dbReference type="PROSITE" id="PS50005">
    <property type="entry name" value="TPR"/>
    <property type="match status" value="1"/>
</dbReference>
<dbReference type="PROSITE" id="PS50293">
    <property type="entry name" value="TPR_REGION"/>
    <property type="match status" value="1"/>
</dbReference>
<comment type="function">
    <text>May play a positive role in AHR-mediated (aromatic hydrocarbon receptor) signaling, possibly by influencing its receptivity for ligand and/or its nuclear targeting.</text>
</comment>
<comment type="subunit">
    <text>Interacts with RET in the pituitary gland; this interaction prevents the formation of the AIP-survivin complex.</text>
</comment>
<comment type="interaction">
    <interactant intactId="EBI-6935014">
        <id>O08915</id>
    </interactant>
    <interactant intactId="EBI-2255627">
        <id>P27601</id>
        <label>Gna13</label>
    </interactant>
    <organismsDiffer>false</organismsDiffer>
    <experiments>3</experiments>
</comment>
<comment type="interaction">
    <interactant intactId="EBI-6935014">
        <id>O08915</id>
    </interactant>
    <interactant intactId="EBI-771975">
        <id>P21279</id>
        <label>Gnaq</label>
    </interactant>
    <organismsDiffer>false</organismsDiffer>
    <experiments>2</experiments>
</comment>
<comment type="interaction">
    <interactant intactId="EBI-6935014">
        <id>O08915</id>
    </interactant>
    <interactant intactId="EBI-6935043">
        <id>P37242</id>
        <label>Thrb</label>
    </interactant>
    <organismsDiffer>false</organismsDiffer>
    <experiments>2</experiments>
</comment>
<comment type="subcellular location">
    <subcellularLocation>
        <location>Cytoplasm</location>
    </subcellularLocation>
</comment>
<proteinExistence type="evidence at protein level"/>
<name>AIP_MOUSE</name>